<comment type="catalytic activity">
    <reaction evidence="3 4">
        <text>Release of a C-terminal amino acid with broad specificity.</text>
        <dbReference type="EC" id="3.4.16.5"/>
    </reaction>
</comment>
<comment type="subunit">
    <text evidence="5">Monomer.</text>
</comment>
<comment type="induction">
    <text>By gibberellic acid (GA).</text>
</comment>
<comment type="similarity">
    <text evidence="5">Belongs to the peptidase S10 family.</text>
</comment>
<keyword id="KW-0121">Carboxypeptidase</keyword>
<keyword id="KW-1015">Disulfide bond</keyword>
<keyword id="KW-0325">Glycoprotein</keyword>
<keyword id="KW-0378">Hydrolase</keyword>
<keyword id="KW-0645">Protease</keyword>
<keyword id="KW-1185">Reference proteome</keyword>
<keyword id="KW-0732">Signal</keyword>
<keyword id="KW-0865">Zymogen</keyword>
<proteinExistence type="evidence at transcript level"/>
<gene>
    <name type="primary">CBP3</name>
</gene>
<sequence length="500" mass="55334">MATTPRLASLLLLLALCAAAAGALRLPPDASFPGAQAERLIRALNLLPGRPRRGLGAGAEDVAPGQLLERRVTLPGLPEGVGDLGHHAGYYRLPNTHDARMFYFFFESRGKKEDPVVIWLTGGPGCSSELAVFYENGPFTIANNMSLVWNKFGWDKISNIIFVDPATGTGFSYSSDDRDTRHDEAGVSNDLYDFLQVFFKKHPEFVKNDFFITGESYAGHYIPAFASRVHQGNKKNEGTHINLKGFAIGNGLTDPAIQYKAYTDYALDMNLIQKADYDRINKFIPPCEFAIKLCGTDGKASCMAAYMVCNSIFNSIMKLVGTKNYYDVRKECEGKLCYDFSNLEKFFGDKAVRQAIGVGDIEFVSCSTSVYQAMLTDWMRNLEVGIPALLEDGINVLIYAGEYDLICNWLGNSRWVHSMEWSGQKDFAKTAESSFLVDDAQAGVLKSHGALSFLKVHNAGHMVPMDQPKAALEMLRRFTQGKLKESVPEEEPATTFYAAI</sequence>
<name>CBP3_WHEAT</name>
<protein>
    <recommendedName>
        <fullName>Serine carboxypeptidase 3</fullName>
        <ecNumber>3.4.16.5</ecNumber>
    </recommendedName>
    <alternativeName>
        <fullName>CP-WIII</fullName>
    </alternativeName>
    <alternativeName>
        <fullName>Serine carboxypeptidase III</fullName>
    </alternativeName>
</protein>
<feature type="signal peptide" evidence="2">
    <location>
        <begin position="1"/>
        <end position="21"/>
    </location>
</feature>
<feature type="propeptide" id="PRO_0000004330" evidence="1">
    <location>
        <begin position="22"/>
        <end position="73"/>
    </location>
</feature>
<feature type="chain" id="PRO_0000004331" description="Serine carboxypeptidase 3">
    <location>
        <begin position="74"/>
        <end position="484"/>
    </location>
</feature>
<feature type="propeptide" id="PRO_0000004332" evidence="1">
    <location>
        <begin position="485"/>
        <end position="500"/>
    </location>
</feature>
<feature type="active site" evidence="1">
    <location>
        <position position="216"/>
    </location>
</feature>
<feature type="active site" evidence="1">
    <location>
        <position position="404"/>
    </location>
</feature>
<feature type="active site" evidence="1">
    <location>
        <position position="461"/>
    </location>
</feature>
<feature type="binding site" evidence="1">
    <location>
        <position position="407"/>
    </location>
    <ligand>
        <name>substrate</name>
    </ligand>
</feature>
<feature type="glycosylation site" description="N-linked (GlcNAc...) asparagine" evidence="2">
    <location>
        <position position="144"/>
    </location>
</feature>
<feature type="disulfide bond" evidence="1">
    <location>
        <begin position="126"/>
        <end position="366"/>
    </location>
</feature>
<feature type="disulfide bond" evidence="1">
    <location>
        <begin position="294"/>
        <end position="309"/>
    </location>
</feature>
<feature type="disulfide bond" evidence="1">
    <location>
        <begin position="332"/>
        <end position="337"/>
    </location>
</feature>
<accession>P11515</accession>
<dbReference type="EC" id="3.4.16.5"/>
<dbReference type="EMBL" id="J02817">
    <property type="protein sequence ID" value="AAA34273.1"/>
    <property type="molecule type" value="Genomic_DNA"/>
</dbReference>
<dbReference type="PIR" id="A29412">
    <property type="entry name" value="A29412"/>
</dbReference>
<dbReference type="SMR" id="P11515"/>
<dbReference type="STRING" id="4565.P11515"/>
<dbReference type="ESTHER" id="wheat-cbp3">
    <property type="family name" value="Carboxypeptidase_S10"/>
</dbReference>
<dbReference type="MEROPS" id="S10.009"/>
<dbReference type="GlyCosmos" id="P11515">
    <property type="glycosylation" value="1 site, No reported glycans"/>
</dbReference>
<dbReference type="PaxDb" id="4565-Traes_6AS_E1707A5FA.1"/>
<dbReference type="eggNOG" id="KOG1282">
    <property type="taxonomic scope" value="Eukaryota"/>
</dbReference>
<dbReference type="Proteomes" id="UP000019116">
    <property type="component" value="Unplaced"/>
</dbReference>
<dbReference type="ExpressionAtlas" id="P11515">
    <property type="expression patterns" value="baseline"/>
</dbReference>
<dbReference type="GO" id="GO:0005773">
    <property type="term" value="C:vacuole"/>
    <property type="evidence" value="ECO:0000318"/>
    <property type="project" value="GO_Central"/>
</dbReference>
<dbReference type="GO" id="GO:0004185">
    <property type="term" value="F:serine-type carboxypeptidase activity"/>
    <property type="evidence" value="ECO:0000318"/>
    <property type="project" value="GO_Central"/>
</dbReference>
<dbReference type="GO" id="GO:0006508">
    <property type="term" value="P:proteolysis"/>
    <property type="evidence" value="ECO:0007669"/>
    <property type="project" value="UniProtKB-KW"/>
</dbReference>
<dbReference type="FunFam" id="3.40.50.1820:FF:000060">
    <property type="entry name" value="Carboxypeptidase"/>
    <property type="match status" value="1"/>
</dbReference>
<dbReference type="Gene3D" id="3.40.50.1820">
    <property type="entry name" value="alpha/beta hydrolase"/>
    <property type="match status" value="1"/>
</dbReference>
<dbReference type="InterPro" id="IPR029058">
    <property type="entry name" value="AB_hydrolase_fold"/>
</dbReference>
<dbReference type="InterPro" id="IPR001563">
    <property type="entry name" value="Peptidase_S10"/>
</dbReference>
<dbReference type="InterPro" id="IPR033124">
    <property type="entry name" value="Ser_caboxypep_his_AS"/>
</dbReference>
<dbReference type="InterPro" id="IPR018202">
    <property type="entry name" value="Ser_caboxypep_ser_AS"/>
</dbReference>
<dbReference type="PANTHER" id="PTHR11802:SF259">
    <property type="entry name" value="SERINE CARBOXYPEPTIDASE-LIKE 48"/>
    <property type="match status" value="1"/>
</dbReference>
<dbReference type="PANTHER" id="PTHR11802">
    <property type="entry name" value="SERINE PROTEASE FAMILY S10 SERINE CARBOXYPEPTIDASE"/>
    <property type="match status" value="1"/>
</dbReference>
<dbReference type="Pfam" id="PF00450">
    <property type="entry name" value="Peptidase_S10"/>
    <property type="match status" value="1"/>
</dbReference>
<dbReference type="PRINTS" id="PR00724">
    <property type="entry name" value="CRBOXYPTASEC"/>
</dbReference>
<dbReference type="SUPFAM" id="SSF53474">
    <property type="entry name" value="alpha/beta-Hydrolases"/>
    <property type="match status" value="1"/>
</dbReference>
<dbReference type="PROSITE" id="PS00560">
    <property type="entry name" value="CARBOXYPEPT_SER_HIS"/>
    <property type="match status" value="1"/>
</dbReference>
<dbReference type="PROSITE" id="PS00131">
    <property type="entry name" value="CARBOXYPEPT_SER_SER"/>
    <property type="match status" value="1"/>
</dbReference>
<organism>
    <name type="scientific">Triticum aestivum</name>
    <name type="common">Wheat</name>
    <dbReference type="NCBI Taxonomy" id="4565"/>
    <lineage>
        <taxon>Eukaryota</taxon>
        <taxon>Viridiplantae</taxon>
        <taxon>Streptophyta</taxon>
        <taxon>Embryophyta</taxon>
        <taxon>Tracheophyta</taxon>
        <taxon>Spermatophyta</taxon>
        <taxon>Magnoliopsida</taxon>
        <taxon>Liliopsida</taxon>
        <taxon>Poales</taxon>
        <taxon>Poaceae</taxon>
        <taxon>BOP clade</taxon>
        <taxon>Pooideae</taxon>
        <taxon>Triticodae</taxon>
        <taxon>Triticeae</taxon>
        <taxon>Triticinae</taxon>
        <taxon>Triticum</taxon>
    </lineage>
</organism>
<evidence type="ECO:0000250" key="1"/>
<evidence type="ECO:0000255" key="2"/>
<evidence type="ECO:0000255" key="3">
    <source>
        <dbReference type="PROSITE-ProRule" id="PRU10074"/>
    </source>
</evidence>
<evidence type="ECO:0000255" key="4">
    <source>
        <dbReference type="PROSITE-ProRule" id="PRU10075"/>
    </source>
</evidence>
<evidence type="ECO:0000305" key="5"/>
<reference key="1">
    <citation type="journal article" date="1987" name="J. Biol. Chem.">
        <title>A gibberellin responsive wheat gene has homology to yeast carboxypeptidase Y.</title>
        <authorList>
            <person name="Baulcombe D.C."/>
            <person name="Barker R.F."/>
            <person name="Jarvis M.G."/>
        </authorList>
    </citation>
    <scope>NUCLEOTIDE SEQUENCE [GENOMIC DNA]</scope>
</reference>